<comment type="catalytic activity">
    <reaction evidence="1">
        <text>L-methionyl-[protein] + [thioredoxin]-disulfide + H2O = L-methionyl-(R)-S-oxide-[protein] + [thioredoxin]-dithiol</text>
        <dbReference type="Rhea" id="RHEA:24164"/>
        <dbReference type="Rhea" id="RHEA-COMP:10698"/>
        <dbReference type="Rhea" id="RHEA-COMP:10700"/>
        <dbReference type="Rhea" id="RHEA-COMP:12313"/>
        <dbReference type="Rhea" id="RHEA-COMP:12314"/>
        <dbReference type="ChEBI" id="CHEBI:15377"/>
        <dbReference type="ChEBI" id="CHEBI:16044"/>
        <dbReference type="ChEBI" id="CHEBI:29950"/>
        <dbReference type="ChEBI" id="CHEBI:45764"/>
        <dbReference type="ChEBI" id="CHEBI:50058"/>
        <dbReference type="EC" id="1.8.4.12"/>
    </reaction>
</comment>
<comment type="cofactor">
    <cofactor evidence="1">
        <name>Zn(2+)</name>
        <dbReference type="ChEBI" id="CHEBI:29105"/>
    </cofactor>
    <text evidence="1">Binds 1 zinc ion per subunit. The zinc ion is important for the structural integrity of the protein.</text>
</comment>
<comment type="similarity">
    <text evidence="1">Belongs to the MsrB Met sulfoxide reductase family.</text>
</comment>
<proteinExistence type="evidence at protein level"/>
<reference key="1">
    <citation type="journal article" date="1997" name="J. Bacteriol.">
        <title>Complete genome sequence of Methanobacterium thermoautotrophicum deltaH: functional analysis and comparative genomics.</title>
        <authorList>
            <person name="Smith D.R."/>
            <person name="Doucette-Stamm L.A."/>
            <person name="Deloughery C."/>
            <person name="Lee H.-M."/>
            <person name="Dubois J."/>
            <person name="Aldredge T."/>
            <person name="Bashirzadeh R."/>
            <person name="Blakely D."/>
            <person name="Cook R."/>
            <person name="Gilbert K."/>
            <person name="Harrison D."/>
            <person name="Hoang L."/>
            <person name="Keagle P."/>
            <person name="Lumm W."/>
            <person name="Pothier B."/>
            <person name="Qiu D."/>
            <person name="Spadafora R."/>
            <person name="Vicare R."/>
            <person name="Wang Y."/>
            <person name="Wierzbowski J."/>
            <person name="Gibson R."/>
            <person name="Jiwani N."/>
            <person name="Caruso A."/>
            <person name="Bush D."/>
            <person name="Safer H."/>
            <person name="Patwell D."/>
            <person name="Prabhakar S."/>
            <person name="McDougall S."/>
            <person name="Shimer G."/>
            <person name="Goyal A."/>
            <person name="Pietrovski S."/>
            <person name="Church G.M."/>
            <person name="Daniels C.J."/>
            <person name="Mao J.-I."/>
            <person name="Rice P."/>
            <person name="Noelling J."/>
            <person name="Reeve J.N."/>
        </authorList>
    </citation>
    <scope>NUCLEOTIDE SEQUENCE [LARGE SCALE GENOMIC DNA]</scope>
    <source>
        <strain>ATCC 29096 / DSM 1053 / JCM 10044 / NBRC 100330 / Delta H</strain>
    </source>
</reference>
<sequence length="151" mass="17303">MKDRIPIFSVAKNRVEMVERIELSDDEWREILDPEAFRVARKAGTEPPFTGKYHDLHDDGIYRCICCGTDLFDSETKFDSGTGWPSFYDVVSEHNIKLREDRSLGMVRCEVLCARCDAHLGHVFDDGPRPTGKRYCMNSAALKFIPRDQIG</sequence>
<evidence type="ECO:0000255" key="1">
    <source>
        <dbReference type="HAMAP-Rule" id="MF_01400"/>
    </source>
</evidence>
<evidence type="ECO:0000255" key="2">
    <source>
        <dbReference type="PROSITE-ProRule" id="PRU01126"/>
    </source>
</evidence>
<evidence type="ECO:0007829" key="3">
    <source>
        <dbReference type="PDB" id="2K8D"/>
    </source>
</evidence>
<feature type="chain" id="PRO_0000140320" description="Peptide methionine sulfoxide reductase MsrB">
    <location>
        <begin position="1"/>
        <end position="151"/>
    </location>
</feature>
<feature type="domain" description="MsrB" evidence="2">
    <location>
        <begin position="25"/>
        <end position="147"/>
    </location>
</feature>
<feature type="active site" description="Nucleophile" evidence="2">
    <location>
        <position position="136"/>
    </location>
</feature>
<feature type="binding site" evidence="2">
    <location>
        <position position="64"/>
    </location>
    <ligand>
        <name>Zn(2+)</name>
        <dbReference type="ChEBI" id="CHEBI:29105"/>
    </ligand>
</feature>
<feature type="binding site" evidence="2">
    <location>
        <position position="67"/>
    </location>
    <ligand>
        <name>Zn(2+)</name>
        <dbReference type="ChEBI" id="CHEBI:29105"/>
    </ligand>
</feature>
<feature type="binding site" evidence="2">
    <location>
        <position position="113"/>
    </location>
    <ligand>
        <name>Zn(2+)</name>
        <dbReference type="ChEBI" id="CHEBI:29105"/>
    </ligand>
</feature>
<feature type="binding site" evidence="2">
    <location>
        <position position="116"/>
    </location>
    <ligand>
        <name>Zn(2+)</name>
        <dbReference type="ChEBI" id="CHEBI:29105"/>
    </ligand>
</feature>
<feature type="strand" evidence="3">
    <location>
        <begin position="4"/>
        <end position="7"/>
    </location>
</feature>
<feature type="helix" evidence="3">
    <location>
        <begin position="10"/>
        <end position="12"/>
    </location>
</feature>
<feature type="strand" evidence="3">
    <location>
        <begin position="16"/>
        <end position="19"/>
    </location>
</feature>
<feature type="helix" evidence="3">
    <location>
        <begin position="27"/>
        <end position="29"/>
    </location>
</feature>
<feature type="helix" evidence="3">
    <location>
        <begin position="36"/>
        <end position="42"/>
    </location>
</feature>
<feature type="strand" evidence="3">
    <location>
        <begin position="46"/>
        <end position="48"/>
    </location>
</feature>
<feature type="strand" evidence="3">
    <location>
        <begin position="60"/>
        <end position="64"/>
    </location>
</feature>
<feature type="turn" evidence="3">
    <location>
        <begin position="65"/>
        <end position="67"/>
    </location>
</feature>
<feature type="strand" evidence="3">
    <location>
        <begin position="70"/>
        <end position="73"/>
    </location>
</feature>
<feature type="helix" evidence="3">
    <location>
        <begin position="74"/>
        <end position="76"/>
    </location>
</feature>
<feature type="strand" evidence="3">
    <location>
        <begin position="85"/>
        <end position="88"/>
    </location>
</feature>
<feature type="strand" evidence="3">
    <location>
        <begin position="95"/>
        <end position="97"/>
    </location>
</feature>
<feature type="strand" evidence="3">
    <location>
        <begin position="108"/>
        <end position="113"/>
    </location>
</feature>
<feature type="strand" evidence="3">
    <location>
        <begin position="116"/>
        <end position="125"/>
    </location>
</feature>
<feature type="strand" evidence="3">
    <location>
        <begin position="127"/>
        <end position="131"/>
    </location>
</feature>
<feature type="strand" evidence="3">
    <location>
        <begin position="133"/>
        <end position="137"/>
    </location>
</feature>
<feature type="strand" evidence="3">
    <location>
        <begin position="142"/>
        <end position="145"/>
    </location>
</feature>
<feature type="strand" evidence="3">
    <location>
        <begin position="147"/>
        <end position="149"/>
    </location>
</feature>
<protein>
    <recommendedName>
        <fullName evidence="1">Peptide methionine sulfoxide reductase MsrB</fullName>
        <ecNumber evidence="1">1.8.4.12</ecNumber>
    </recommendedName>
    <alternativeName>
        <fullName evidence="1">Peptide-methionine (R)-S-oxide reductase</fullName>
    </alternativeName>
</protein>
<gene>
    <name evidence="1" type="primary">msrB</name>
    <name type="ordered locus">MTH_711</name>
</gene>
<organism>
    <name type="scientific">Methanothermobacter thermautotrophicus (strain ATCC 29096 / DSM 1053 / JCM 10044 / NBRC 100330 / Delta H)</name>
    <name type="common">Methanobacterium thermoautotrophicum</name>
    <dbReference type="NCBI Taxonomy" id="187420"/>
    <lineage>
        <taxon>Archaea</taxon>
        <taxon>Methanobacteriati</taxon>
        <taxon>Methanobacteriota</taxon>
        <taxon>Methanomada group</taxon>
        <taxon>Methanobacteria</taxon>
        <taxon>Methanobacteriales</taxon>
        <taxon>Methanobacteriaceae</taxon>
        <taxon>Methanothermobacter</taxon>
    </lineage>
</organism>
<accession>O26807</accession>
<dbReference type="EC" id="1.8.4.12" evidence="1"/>
<dbReference type="EMBL" id="AE000666">
    <property type="protein sequence ID" value="AAB85216.1"/>
    <property type="molecule type" value="Genomic_DNA"/>
</dbReference>
<dbReference type="PIR" id="A69195">
    <property type="entry name" value="A69195"/>
</dbReference>
<dbReference type="RefSeq" id="WP_010876350.1">
    <property type="nucleotide sequence ID" value="NC_000916.1"/>
</dbReference>
<dbReference type="PDB" id="2K8D">
    <property type="method" value="NMR"/>
    <property type="chains" value="A=1-151"/>
</dbReference>
<dbReference type="PDBsum" id="2K8D"/>
<dbReference type="BMRB" id="O26807"/>
<dbReference type="SMR" id="O26807"/>
<dbReference type="STRING" id="187420.MTH_711"/>
<dbReference type="PaxDb" id="187420-MTH_711"/>
<dbReference type="EnsemblBacteria" id="AAB85216">
    <property type="protein sequence ID" value="AAB85216"/>
    <property type="gene ID" value="MTH_711"/>
</dbReference>
<dbReference type="GeneID" id="82297170"/>
<dbReference type="KEGG" id="mth:MTH_711"/>
<dbReference type="PATRIC" id="fig|187420.15.peg.695"/>
<dbReference type="HOGENOM" id="CLU_031040_8_5_2"/>
<dbReference type="InParanoid" id="O26807"/>
<dbReference type="BRENDA" id="1.8.4.12">
    <property type="organism ID" value="3256"/>
</dbReference>
<dbReference type="EvolutionaryTrace" id="O26807"/>
<dbReference type="Proteomes" id="UP000005223">
    <property type="component" value="Chromosome"/>
</dbReference>
<dbReference type="GO" id="GO:0005737">
    <property type="term" value="C:cytoplasm"/>
    <property type="evidence" value="ECO:0007669"/>
    <property type="project" value="TreeGrafter"/>
</dbReference>
<dbReference type="GO" id="GO:0033743">
    <property type="term" value="F:peptide-methionine (R)-S-oxide reductase activity"/>
    <property type="evidence" value="ECO:0007669"/>
    <property type="project" value="UniProtKB-UniRule"/>
</dbReference>
<dbReference type="GO" id="GO:0008270">
    <property type="term" value="F:zinc ion binding"/>
    <property type="evidence" value="ECO:0007669"/>
    <property type="project" value="UniProtKB-UniRule"/>
</dbReference>
<dbReference type="GO" id="GO:0030091">
    <property type="term" value="P:protein repair"/>
    <property type="evidence" value="ECO:0007669"/>
    <property type="project" value="InterPro"/>
</dbReference>
<dbReference type="GO" id="GO:0006979">
    <property type="term" value="P:response to oxidative stress"/>
    <property type="evidence" value="ECO:0007669"/>
    <property type="project" value="InterPro"/>
</dbReference>
<dbReference type="FunFam" id="2.170.150.20:FF:000001">
    <property type="entry name" value="Peptide methionine sulfoxide reductase MsrB"/>
    <property type="match status" value="1"/>
</dbReference>
<dbReference type="Gene3D" id="2.170.150.20">
    <property type="entry name" value="Peptide methionine sulfoxide reductase"/>
    <property type="match status" value="1"/>
</dbReference>
<dbReference type="HAMAP" id="MF_01400">
    <property type="entry name" value="MsrB"/>
    <property type="match status" value="1"/>
</dbReference>
<dbReference type="InterPro" id="IPR028427">
    <property type="entry name" value="Met_Sox_Rdtase_MsrB"/>
</dbReference>
<dbReference type="InterPro" id="IPR002579">
    <property type="entry name" value="Met_Sox_Rdtase_MsrB_dom"/>
</dbReference>
<dbReference type="InterPro" id="IPR011057">
    <property type="entry name" value="Mss4-like_sf"/>
</dbReference>
<dbReference type="NCBIfam" id="TIGR00357">
    <property type="entry name" value="peptide-methionine (R)-S-oxide reductase MsrB"/>
    <property type="match status" value="1"/>
</dbReference>
<dbReference type="PANTHER" id="PTHR10173">
    <property type="entry name" value="METHIONINE SULFOXIDE REDUCTASE"/>
    <property type="match status" value="1"/>
</dbReference>
<dbReference type="PANTHER" id="PTHR10173:SF52">
    <property type="entry name" value="METHIONINE-R-SULFOXIDE REDUCTASE B1"/>
    <property type="match status" value="1"/>
</dbReference>
<dbReference type="Pfam" id="PF01641">
    <property type="entry name" value="SelR"/>
    <property type="match status" value="1"/>
</dbReference>
<dbReference type="SUPFAM" id="SSF51316">
    <property type="entry name" value="Mss4-like"/>
    <property type="match status" value="1"/>
</dbReference>
<dbReference type="PROSITE" id="PS51790">
    <property type="entry name" value="MSRB"/>
    <property type="match status" value="1"/>
</dbReference>
<name>MSRB_METTH</name>
<keyword id="KW-0002">3D-structure</keyword>
<keyword id="KW-0479">Metal-binding</keyword>
<keyword id="KW-0560">Oxidoreductase</keyword>
<keyword id="KW-1185">Reference proteome</keyword>
<keyword id="KW-0862">Zinc</keyword>